<sequence>MANRLKEKYTNEVVPALTEKFNYSSVMAVPKVEKIVLNMGVGDAVSNAKNLEKAAAELALISGQKPLITKAKKSIAGFRLREGVAIGAKVTLRGERMYEFLDKLVSVSLPRVRDFHGVPTKSFDGRGNYTLGVKEQLIFPEINFDDVDKVRGLDIVIVTTANTDEESRELLKGLGMPFAK</sequence>
<keyword id="KW-0687">Ribonucleoprotein</keyword>
<keyword id="KW-0689">Ribosomal protein</keyword>
<keyword id="KW-0694">RNA-binding</keyword>
<keyword id="KW-0699">rRNA-binding</keyword>
<keyword id="KW-0820">tRNA-binding</keyword>
<name>RL5_STRA1</name>
<dbReference type="EMBL" id="CP000114">
    <property type="protein sequence ID" value="ABA45132.1"/>
    <property type="molecule type" value="Genomic_DNA"/>
</dbReference>
<dbReference type="RefSeq" id="WP_000013545.1">
    <property type="nucleotide sequence ID" value="NC_007432.1"/>
</dbReference>
<dbReference type="SMR" id="Q3K3V7"/>
<dbReference type="GeneID" id="66885030"/>
<dbReference type="KEGG" id="sak:SAK_0103"/>
<dbReference type="HOGENOM" id="CLU_061015_2_1_9"/>
<dbReference type="GO" id="GO:1990904">
    <property type="term" value="C:ribonucleoprotein complex"/>
    <property type="evidence" value="ECO:0007669"/>
    <property type="project" value="UniProtKB-KW"/>
</dbReference>
<dbReference type="GO" id="GO:0005840">
    <property type="term" value="C:ribosome"/>
    <property type="evidence" value="ECO:0007669"/>
    <property type="project" value="UniProtKB-KW"/>
</dbReference>
<dbReference type="GO" id="GO:0019843">
    <property type="term" value="F:rRNA binding"/>
    <property type="evidence" value="ECO:0007669"/>
    <property type="project" value="UniProtKB-UniRule"/>
</dbReference>
<dbReference type="GO" id="GO:0003735">
    <property type="term" value="F:structural constituent of ribosome"/>
    <property type="evidence" value="ECO:0007669"/>
    <property type="project" value="InterPro"/>
</dbReference>
<dbReference type="GO" id="GO:0000049">
    <property type="term" value="F:tRNA binding"/>
    <property type="evidence" value="ECO:0007669"/>
    <property type="project" value="UniProtKB-UniRule"/>
</dbReference>
<dbReference type="GO" id="GO:0006412">
    <property type="term" value="P:translation"/>
    <property type="evidence" value="ECO:0007669"/>
    <property type="project" value="UniProtKB-UniRule"/>
</dbReference>
<dbReference type="FunFam" id="3.30.1440.10:FF:000001">
    <property type="entry name" value="50S ribosomal protein L5"/>
    <property type="match status" value="1"/>
</dbReference>
<dbReference type="Gene3D" id="3.30.1440.10">
    <property type="match status" value="1"/>
</dbReference>
<dbReference type="HAMAP" id="MF_01333_B">
    <property type="entry name" value="Ribosomal_uL5_B"/>
    <property type="match status" value="1"/>
</dbReference>
<dbReference type="InterPro" id="IPR002132">
    <property type="entry name" value="Ribosomal_uL5"/>
</dbReference>
<dbReference type="InterPro" id="IPR020930">
    <property type="entry name" value="Ribosomal_uL5_bac-type"/>
</dbReference>
<dbReference type="InterPro" id="IPR031309">
    <property type="entry name" value="Ribosomal_uL5_C"/>
</dbReference>
<dbReference type="InterPro" id="IPR020929">
    <property type="entry name" value="Ribosomal_uL5_CS"/>
</dbReference>
<dbReference type="InterPro" id="IPR022803">
    <property type="entry name" value="Ribosomal_uL5_dom_sf"/>
</dbReference>
<dbReference type="InterPro" id="IPR031310">
    <property type="entry name" value="Ribosomal_uL5_N"/>
</dbReference>
<dbReference type="NCBIfam" id="NF000585">
    <property type="entry name" value="PRK00010.1"/>
    <property type="match status" value="1"/>
</dbReference>
<dbReference type="PANTHER" id="PTHR11994">
    <property type="entry name" value="60S RIBOSOMAL PROTEIN L11-RELATED"/>
    <property type="match status" value="1"/>
</dbReference>
<dbReference type="Pfam" id="PF00281">
    <property type="entry name" value="Ribosomal_L5"/>
    <property type="match status" value="1"/>
</dbReference>
<dbReference type="Pfam" id="PF00673">
    <property type="entry name" value="Ribosomal_L5_C"/>
    <property type="match status" value="1"/>
</dbReference>
<dbReference type="PIRSF" id="PIRSF002161">
    <property type="entry name" value="Ribosomal_L5"/>
    <property type="match status" value="1"/>
</dbReference>
<dbReference type="SUPFAM" id="SSF55282">
    <property type="entry name" value="RL5-like"/>
    <property type="match status" value="1"/>
</dbReference>
<dbReference type="PROSITE" id="PS00358">
    <property type="entry name" value="RIBOSOMAL_L5"/>
    <property type="match status" value="1"/>
</dbReference>
<gene>
    <name evidence="1" type="primary">rplE</name>
    <name type="ordered locus">SAK_0103</name>
</gene>
<accession>Q3K3V7</accession>
<proteinExistence type="inferred from homology"/>
<protein>
    <recommendedName>
        <fullName evidence="1">Large ribosomal subunit protein uL5</fullName>
    </recommendedName>
    <alternativeName>
        <fullName evidence="2">50S ribosomal protein L5</fullName>
    </alternativeName>
</protein>
<comment type="function">
    <text evidence="1">This is one of the proteins that bind and probably mediate the attachment of the 5S RNA into the large ribosomal subunit, where it forms part of the central protuberance. In the 70S ribosome it contacts protein S13 of the 30S subunit (bridge B1b), connecting the 2 subunits; this bridge is implicated in subunit movement. Contacts the P site tRNA; the 5S rRNA and some of its associated proteins might help stabilize positioning of ribosome-bound tRNAs.</text>
</comment>
<comment type="subunit">
    <text evidence="1">Part of the 50S ribosomal subunit; part of the 5S rRNA/L5/L18/L25 subcomplex. Contacts the 5S rRNA and the P site tRNA. Forms a bridge to the 30S subunit in the 70S ribosome.</text>
</comment>
<comment type="similarity">
    <text evidence="1">Belongs to the universal ribosomal protein uL5 family.</text>
</comment>
<reference key="1">
    <citation type="journal article" date="2005" name="Proc. Natl. Acad. Sci. U.S.A.">
        <title>Genome analysis of multiple pathogenic isolates of Streptococcus agalactiae: implications for the microbial 'pan-genome'.</title>
        <authorList>
            <person name="Tettelin H."/>
            <person name="Masignani V."/>
            <person name="Cieslewicz M.J."/>
            <person name="Donati C."/>
            <person name="Medini D."/>
            <person name="Ward N.L."/>
            <person name="Angiuoli S.V."/>
            <person name="Crabtree J."/>
            <person name="Jones A.L."/>
            <person name="Durkin A.S."/>
            <person name="DeBoy R.T."/>
            <person name="Davidsen T.M."/>
            <person name="Mora M."/>
            <person name="Scarselli M."/>
            <person name="Margarit y Ros I."/>
            <person name="Peterson J.D."/>
            <person name="Hauser C.R."/>
            <person name="Sundaram J.P."/>
            <person name="Nelson W.C."/>
            <person name="Madupu R."/>
            <person name="Brinkac L.M."/>
            <person name="Dodson R.J."/>
            <person name="Rosovitz M.J."/>
            <person name="Sullivan S.A."/>
            <person name="Daugherty S.C."/>
            <person name="Haft D.H."/>
            <person name="Selengut J."/>
            <person name="Gwinn M.L."/>
            <person name="Zhou L."/>
            <person name="Zafar N."/>
            <person name="Khouri H."/>
            <person name="Radune D."/>
            <person name="Dimitrov G."/>
            <person name="Watkins K."/>
            <person name="O'Connor K.J."/>
            <person name="Smith S."/>
            <person name="Utterback T.R."/>
            <person name="White O."/>
            <person name="Rubens C.E."/>
            <person name="Grandi G."/>
            <person name="Madoff L.C."/>
            <person name="Kasper D.L."/>
            <person name="Telford J.L."/>
            <person name="Wessels M.R."/>
            <person name="Rappuoli R."/>
            <person name="Fraser C.M."/>
        </authorList>
    </citation>
    <scope>NUCLEOTIDE SEQUENCE [LARGE SCALE GENOMIC DNA]</scope>
    <source>
        <strain>ATCC 27591 / A909 / CDC SS700</strain>
    </source>
</reference>
<organism>
    <name type="scientific">Streptococcus agalactiae serotype Ia (strain ATCC 27591 / A909 / CDC SS700)</name>
    <dbReference type="NCBI Taxonomy" id="205921"/>
    <lineage>
        <taxon>Bacteria</taxon>
        <taxon>Bacillati</taxon>
        <taxon>Bacillota</taxon>
        <taxon>Bacilli</taxon>
        <taxon>Lactobacillales</taxon>
        <taxon>Streptococcaceae</taxon>
        <taxon>Streptococcus</taxon>
    </lineage>
</organism>
<feature type="chain" id="PRO_0000243069" description="Large ribosomal subunit protein uL5">
    <location>
        <begin position="1"/>
        <end position="180"/>
    </location>
</feature>
<evidence type="ECO:0000255" key="1">
    <source>
        <dbReference type="HAMAP-Rule" id="MF_01333"/>
    </source>
</evidence>
<evidence type="ECO:0000305" key="2"/>